<feature type="chain" id="PRO_0000319676" description="Phosphoribosyl-ATP pyrophosphatase">
    <location>
        <begin position="1"/>
        <end position="95"/>
    </location>
</feature>
<gene>
    <name evidence="1" type="primary">hisE</name>
    <name type="ordered locus">UNCMA_05370</name>
    <name type="ORF">RCIX2673</name>
</gene>
<reference key="1">
    <citation type="journal article" date="2006" name="Science">
        <title>Genome of rice cluster I archaea -- the key methane producers in the rice rhizosphere.</title>
        <authorList>
            <person name="Erkel C."/>
            <person name="Kube M."/>
            <person name="Reinhardt R."/>
            <person name="Liesack W."/>
        </authorList>
    </citation>
    <scope>NUCLEOTIDE SEQUENCE [LARGE SCALE GENOMIC DNA]</scope>
    <source>
        <strain>DSM 22066 / NBRC 105507 / MRE50</strain>
    </source>
</reference>
<evidence type="ECO:0000255" key="1">
    <source>
        <dbReference type="HAMAP-Rule" id="MF_01020"/>
    </source>
</evidence>
<keyword id="KW-0028">Amino-acid biosynthesis</keyword>
<keyword id="KW-0067">ATP-binding</keyword>
<keyword id="KW-0963">Cytoplasm</keyword>
<keyword id="KW-0368">Histidine biosynthesis</keyword>
<keyword id="KW-0378">Hydrolase</keyword>
<keyword id="KW-0547">Nucleotide-binding</keyword>
<keyword id="KW-1185">Reference proteome</keyword>
<comment type="catalytic activity">
    <reaction evidence="1">
        <text>1-(5-phospho-beta-D-ribosyl)-ATP + H2O = 1-(5-phospho-beta-D-ribosyl)-5'-AMP + diphosphate + H(+)</text>
        <dbReference type="Rhea" id="RHEA:22828"/>
        <dbReference type="ChEBI" id="CHEBI:15377"/>
        <dbReference type="ChEBI" id="CHEBI:15378"/>
        <dbReference type="ChEBI" id="CHEBI:33019"/>
        <dbReference type="ChEBI" id="CHEBI:59457"/>
        <dbReference type="ChEBI" id="CHEBI:73183"/>
        <dbReference type="EC" id="3.6.1.31"/>
    </reaction>
</comment>
<comment type="pathway">
    <text evidence="1">Amino-acid biosynthesis; L-histidine biosynthesis; L-histidine from 5-phospho-alpha-D-ribose 1-diphosphate: step 2/9.</text>
</comment>
<comment type="subcellular location">
    <subcellularLocation>
        <location evidence="1">Cytoplasm</location>
    </subcellularLocation>
</comment>
<comment type="similarity">
    <text evidence="1">Belongs to the PRA-PH family.</text>
</comment>
<name>HIS2_METAR</name>
<sequence length="95" mass="10800">MADVLDEVYAVIADRKVNPKEGSYTTSLYNHRKGIDKVLEKIGEESTELIIAAKNGGEKEIVSECADLFFHAMVLLAAKDIPFEKIKEEFERRRK</sequence>
<protein>
    <recommendedName>
        <fullName evidence="1">Phosphoribosyl-ATP pyrophosphatase</fullName>
        <shortName evidence="1">PRA-PH</shortName>
        <ecNumber evidence="1">3.6.1.31</ecNumber>
    </recommendedName>
</protein>
<dbReference type="EC" id="3.6.1.31" evidence="1"/>
<dbReference type="EMBL" id="AM114193">
    <property type="protein sequence ID" value="CAJ37720.1"/>
    <property type="molecule type" value="Genomic_DNA"/>
</dbReference>
<dbReference type="RefSeq" id="WP_012034866.1">
    <property type="nucleotide sequence ID" value="NC_009464.1"/>
</dbReference>
<dbReference type="SMR" id="Q0W1M3"/>
<dbReference type="STRING" id="351160.RCIX2673"/>
<dbReference type="GeneID" id="5145396"/>
<dbReference type="KEGG" id="rci:RCIX2673"/>
<dbReference type="PATRIC" id="fig|351160.9.peg.563"/>
<dbReference type="eggNOG" id="arCOG02677">
    <property type="taxonomic scope" value="Archaea"/>
</dbReference>
<dbReference type="OrthoDB" id="39686at2157"/>
<dbReference type="UniPathway" id="UPA00031">
    <property type="reaction ID" value="UER00007"/>
</dbReference>
<dbReference type="Proteomes" id="UP000000663">
    <property type="component" value="Chromosome"/>
</dbReference>
<dbReference type="GO" id="GO:0005737">
    <property type="term" value="C:cytoplasm"/>
    <property type="evidence" value="ECO:0007669"/>
    <property type="project" value="UniProtKB-SubCell"/>
</dbReference>
<dbReference type="GO" id="GO:0005524">
    <property type="term" value="F:ATP binding"/>
    <property type="evidence" value="ECO:0007669"/>
    <property type="project" value="UniProtKB-KW"/>
</dbReference>
<dbReference type="GO" id="GO:0004636">
    <property type="term" value="F:phosphoribosyl-ATP diphosphatase activity"/>
    <property type="evidence" value="ECO:0007669"/>
    <property type="project" value="UniProtKB-UniRule"/>
</dbReference>
<dbReference type="GO" id="GO:0000105">
    <property type="term" value="P:L-histidine biosynthetic process"/>
    <property type="evidence" value="ECO:0007669"/>
    <property type="project" value="UniProtKB-UniRule"/>
</dbReference>
<dbReference type="CDD" id="cd11534">
    <property type="entry name" value="NTP-PPase_HisIE_like"/>
    <property type="match status" value="1"/>
</dbReference>
<dbReference type="Gene3D" id="1.10.287.1080">
    <property type="entry name" value="MazG-like"/>
    <property type="match status" value="1"/>
</dbReference>
<dbReference type="HAMAP" id="MF_01020">
    <property type="entry name" value="HisE"/>
    <property type="match status" value="1"/>
</dbReference>
<dbReference type="InterPro" id="IPR008179">
    <property type="entry name" value="HisE"/>
</dbReference>
<dbReference type="InterPro" id="IPR021130">
    <property type="entry name" value="PRib-ATP_PPHydrolase-like"/>
</dbReference>
<dbReference type="NCBIfam" id="TIGR03188">
    <property type="entry name" value="histidine_hisI"/>
    <property type="match status" value="1"/>
</dbReference>
<dbReference type="NCBIfam" id="NF001611">
    <property type="entry name" value="PRK00400.1-3"/>
    <property type="match status" value="1"/>
</dbReference>
<dbReference type="PANTHER" id="PTHR42945">
    <property type="entry name" value="HISTIDINE BIOSYNTHESIS BIFUNCTIONAL PROTEIN"/>
    <property type="match status" value="1"/>
</dbReference>
<dbReference type="PANTHER" id="PTHR42945:SF9">
    <property type="entry name" value="HISTIDINE BIOSYNTHESIS BIFUNCTIONAL PROTEIN HISIE"/>
    <property type="match status" value="1"/>
</dbReference>
<dbReference type="Pfam" id="PF01503">
    <property type="entry name" value="PRA-PH"/>
    <property type="match status" value="1"/>
</dbReference>
<dbReference type="SUPFAM" id="SSF101386">
    <property type="entry name" value="all-alpha NTP pyrophosphatases"/>
    <property type="match status" value="1"/>
</dbReference>
<organism>
    <name type="scientific">Methanocella arvoryzae (strain DSM 22066 / NBRC 105507 / MRE50)</name>
    <dbReference type="NCBI Taxonomy" id="351160"/>
    <lineage>
        <taxon>Archaea</taxon>
        <taxon>Methanobacteriati</taxon>
        <taxon>Methanobacteriota</taxon>
        <taxon>Stenosarchaea group</taxon>
        <taxon>Methanomicrobia</taxon>
        <taxon>Methanocellales</taxon>
        <taxon>Methanocellaceae</taxon>
        <taxon>Methanocella</taxon>
    </lineage>
</organism>
<proteinExistence type="inferred from homology"/>
<accession>Q0W1M3</accession>